<accession>Q81MB0</accession>
<accession>Q6HTR2</accession>
<accession>Q6KN00</accession>
<sequence length="395" mass="44072">MNQPWRTHLQTKLKQLHEQGQYRNLHVTEQAEETWLIRDEKRMLNLASNNYLGLAGDERLKEAAIVCTRKYGTGATASRLVVGNYSLYEEVERSICNWKGTEKALVVNSGFTANVGAISSLACRHDIVFSDKLNHASIVDGIILSGAEHKRYRHNDLNHLEALLKTASPEKRKLIVTDTVFSMDGDTAHLRELVQLKEKYGAIIIVDEAHASGIYGIGGAGLSHIEKDLAQKIDIHMGTFSKALGCYGAYLTGDAIYIEYLQNMMRSFIFTTALPPSTLGAVQKAIEIVQEDHKRRENLIANGEYFRSKLREAGFNIGNSSTHIVPIVVGSNENTLRFSKRLQEAGIAAIAIRPPTVPVHSSRIRFAVTSQHTIADLKWAIDRITHIAKEEELFV</sequence>
<gene>
    <name type="primary">bioF</name>
    <name type="ordered locus">BA_4339</name>
    <name type="ordered locus">GBAA_4339</name>
    <name type="ordered locus">BAS4026</name>
</gene>
<evidence type="ECO:0000250" key="1"/>
<evidence type="ECO:0000305" key="2"/>
<organism>
    <name type="scientific">Bacillus anthracis</name>
    <dbReference type="NCBI Taxonomy" id="1392"/>
    <lineage>
        <taxon>Bacteria</taxon>
        <taxon>Bacillati</taxon>
        <taxon>Bacillota</taxon>
        <taxon>Bacilli</taxon>
        <taxon>Bacillales</taxon>
        <taxon>Bacillaceae</taxon>
        <taxon>Bacillus</taxon>
        <taxon>Bacillus cereus group</taxon>
    </lineage>
</organism>
<name>BIOF_BACAN</name>
<keyword id="KW-0093">Biotin biosynthesis</keyword>
<keyword id="KW-0663">Pyridoxal phosphate</keyword>
<keyword id="KW-1185">Reference proteome</keyword>
<keyword id="KW-0808">Transferase</keyword>
<protein>
    <recommendedName>
        <fullName>Putative 8-amino-7-oxononanoate synthase</fullName>
        <shortName>AONS</shortName>
        <ecNumber>2.3.1.47</ecNumber>
    </recommendedName>
    <alternativeName>
        <fullName>7-keto-8-amino-pelargonic acid synthase</fullName>
        <shortName>7-KAP synthase</shortName>
    </alternativeName>
    <alternativeName>
        <fullName>8-amino-7-ketopelargonate synthase</fullName>
    </alternativeName>
</protein>
<reference key="1">
    <citation type="journal article" date="2003" name="Nature">
        <title>The genome sequence of Bacillus anthracis Ames and comparison to closely related bacteria.</title>
        <authorList>
            <person name="Read T.D."/>
            <person name="Peterson S.N."/>
            <person name="Tourasse N.J."/>
            <person name="Baillie L.W."/>
            <person name="Paulsen I.T."/>
            <person name="Nelson K.E."/>
            <person name="Tettelin H."/>
            <person name="Fouts D.E."/>
            <person name="Eisen J.A."/>
            <person name="Gill S.R."/>
            <person name="Holtzapple E.K."/>
            <person name="Okstad O.A."/>
            <person name="Helgason E."/>
            <person name="Rilstone J."/>
            <person name="Wu M."/>
            <person name="Kolonay J.F."/>
            <person name="Beanan M.J."/>
            <person name="Dodson R.J."/>
            <person name="Brinkac L.M."/>
            <person name="Gwinn M.L."/>
            <person name="DeBoy R.T."/>
            <person name="Madpu R."/>
            <person name="Daugherty S.C."/>
            <person name="Durkin A.S."/>
            <person name="Haft D.H."/>
            <person name="Nelson W.C."/>
            <person name="Peterson J.D."/>
            <person name="Pop M."/>
            <person name="Khouri H.M."/>
            <person name="Radune D."/>
            <person name="Benton J.L."/>
            <person name="Mahamoud Y."/>
            <person name="Jiang L."/>
            <person name="Hance I.R."/>
            <person name="Weidman J.F."/>
            <person name="Berry K.J."/>
            <person name="Plaut R.D."/>
            <person name="Wolf A.M."/>
            <person name="Watkins K.L."/>
            <person name="Nierman W.C."/>
            <person name="Hazen A."/>
            <person name="Cline R.T."/>
            <person name="Redmond C."/>
            <person name="Thwaite J.E."/>
            <person name="White O."/>
            <person name="Salzberg S.L."/>
            <person name="Thomason B."/>
            <person name="Friedlander A.M."/>
            <person name="Koehler T.M."/>
            <person name="Hanna P.C."/>
            <person name="Kolstoe A.-B."/>
            <person name="Fraser C.M."/>
        </authorList>
    </citation>
    <scope>NUCLEOTIDE SEQUENCE [LARGE SCALE GENOMIC DNA]</scope>
    <source>
        <strain>Ames / isolate Porton</strain>
    </source>
</reference>
<reference key="2">
    <citation type="submission" date="2004-01" db="EMBL/GenBank/DDBJ databases">
        <title>Complete genome sequence of Bacillus anthracis Sterne.</title>
        <authorList>
            <person name="Brettin T.S."/>
            <person name="Bruce D."/>
            <person name="Challacombe J.F."/>
            <person name="Gilna P."/>
            <person name="Han C."/>
            <person name="Hill K."/>
            <person name="Hitchcock P."/>
            <person name="Jackson P."/>
            <person name="Keim P."/>
            <person name="Longmire J."/>
            <person name="Lucas S."/>
            <person name="Okinaka R."/>
            <person name="Richardson P."/>
            <person name="Rubin E."/>
            <person name="Tice H."/>
        </authorList>
    </citation>
    <scope>NUCLEOTIDE SEQUENCE [LARGE SCALE GENOMIC DNA]</scope>
    <source>
        <strain>Sterne</strain>
    </source>
</reference>
<reference key="3">
    <citation type="journal article" date="2009" name="J. Bacteriol.">
        <title>The complete genome sequence of Bacillus anthracis Ames 'Ancestor'.</title>
        <authorList>
            <person name="Ravel J."/>
            <person name="Jiang L."/>
            <person name="Stanley S.T."/>
            <person name="Wilson M.R."/>
            <person name="Decker R.S."/>
            <person name="Read T.D."/>
            <person name="Worsham P."/>
            <person name="Keim P.S."/>
            <person name="Salzberg S.L."/>
            <person name="Fraser-Liggett C.M."/>
            <person name="Rasko D.A."/>
        </authorList>
    </citation>
    <scope>NUCLEOTIDE SEQUENCE [LARGE SCALE GENOMIC DNA]</scope>
    <source>
        <strain>Ames ancestor</strain>
    </source>
</reference>
<comment type="function">
    <text evidence="1">Catalyzes the decarboxylative condensation of pimeloyl-[acyl-carrier protein] and L-alanine to produce 8-amino-7-oxononanoate (AON), [acyl-carrier protein], and carbon dioxide.</text>
</comment>
<comment type="catalytic activity">
    <reaction>
        <text>6-carboxyhexanoyl-[ACP] + L-alanine + H(+) = (8S)-8-amino-7-oxononanoate + holo-[ACP] + CO2</text>
        <dbReference type="Rhea" id="RHEA:42288"/>
        <dbReference type="Rhea" id="RHEA-COMP:9685"/>
        <dbReference type="Rhea" id="RHEA-COMP:9955"/>
        <dbReference type="ChEBI" id="CHEBI:15378"/>
        <dbReference type="ChEBI" id="CHEBI:16526"/>
        <dbReference type="ChEBI" id="CHEBI:57972"/>
        <dbReference type="ChEBI" id="CHEBI:64479"/>
        <dbReference type="ChEBI" id="CHEBI:78846"/>
        <dbReference type="ChEBI" id="CHEBI:149468"/>
        <dbReference type="EC" id="2.3.1.47"/>
    </reaction>
</comment>
<comment type="cofactor">
    <cofactor evidence="1">
        <name>pyridoxal 5'-phosphate</name>
        <dbReference type="ChEBI" id="CHEBI:597326"/>
    </cofactor>
</comment>
<comment type="pathway">
    <text>Cofactor biosynthesis; biotin biosynthesis.</text>
</comment>
<comment type="subunit">
    <text evidence="1">Homodimer.</text>
</comment>
<comment type="similarity">
    <text evidence="2">Belongs to the class-II pyridoxal-phosphate-dependent aminotransferase family. BioF subfamily.</text>
</comment>
<dbReference type="EC" id="2.3.1.47"/>
<dbReference type="EMBL" id="AE016879">
    <property type="protein sequence ID" value="AAP28058.1"/>
    <property type="molecule type" value="Genomic_DNA"/>
</dbReference>
<dbReference type="EMBL" id="AE017334">
    <property type="protein sequence ID" value="AAT33460.1"/>
    <property type="molecule type" value="Genomic_DNA"/>
</dbReference>
<dbReference type="EMBL" id="AE017225">
    <property type="protein sequence ID" value="AAT56327.1"/>
    <property type="molecule type" value="Genomic_DNA"/>
</dbReference>
<dbReference type="RefSeq" id="NP_846572.1">
    <property type="nucleotide sequence ID" value="NC_003997.3"/>
</dbReference>
<dbReference type="RefSeq" id="WP_001075618.1">
    <property type="nucleotide sequence ID" value="NZ_WXXJ01000027.1"/>
</dbReference>
<dbReference type="RefSeq" id="YP_030276.1">
    <property type="nucleotide sequence ID" value="NC_005945.1"/>
</dbReference>
<dbReference type="SMR" id="Q81MB0"/>
<dbReference type="STRING" id="261594.GBAA_4339"/>
<dbReference type="DNASU" id="1087553"/>
<dbReference type="GeneID" id="45024006"/>
<dbReference type="KEGG" id="ban:BA_4339"/>
<dbReference type="KEGG" id="banh:HYU01_21195"/>
<dbReference type="KEGG" id="bar:GBAA_4339"/>
<dbReference type="KEGG" id="bat:BAS4026"/>
<dbReference type="PATRIC" id="fig|198094.11.peg.4308"/>
<dbReference type="eggNOG" id="COG0156">
    <property type="taxonomic scope" value="Bacteria"/>
</dbReference>
<dbReference type="HOGENOM" id="CLU_015846_11_2_9"/>
<dbReference type="OMA" id="FSMDGDQ"/>
<dbReference type="OrthoDB" id="9807157at2"/>
<dbReference type="UniPathway" id="UPA00078"/>
<dbReference type="Proteomes" id="UP000000427">
    <property type="component" value="Chromosome"/>
</dbReference>
<dbReference type="Proteomes" id="UP000000594">
    <property type="component" value="Chromosome"/>
</dbReference>
<dbReference type="GO" id="GO:0008710">
    <property type="term" value="F:8-amino-7-oxononanoate synthase activity"/>
    <property type="evidence" value="ECO:0007669"/>
    <property type="project" value="UniProtKB-EC"/>
</dbReference>
<dbReference type="GO" id="GO:0030170">
    <property type="term" value="F:pyridoxal phosphate binding"/>
    <property type="evidence" value="ECO:0007669"/>
    <property type="project" value="InterPro"/>
</dbReference>
<dbReference type="GO" id="GO:0009102">
    <property type="term" value="P:biotin biosynthetic process"/>
    <property type="evidence" value="ECO:0007669"/>
    <property type="project" value="UniProtKB-UniPathway"/>
</dbReference>
<dbReference type="CDD" id="cd06454">
    <property type="entry name" value="KBL_like"/>
    <property type="match status" value="1"/>
</dbReference>
<dbReference type="FunFam" id="3.40.640.10:FF:000006">
    <property type="entry name" value="5-aminolevulinate synthase, mitochondrial"/>
    <property type="match status" value="1"/>
</dbReference>
<dbReference type="Gene3D" id="3.90.1150.10">
    <property type="entry name" value="Aspartate Aminotransferase, domain 1"/>
    <property type="match status" value="1"/>
</dbReference>
<dbReference type="Gene3D" id="3.40.640.10">
    <property type="entry name" value="Type I PLP-dependent aspartate aminotransferase-like (Major domain)"/>
    <property type="match status" value="1"/>
</dbReference>
<dbReference type="InterPro" id="IPR001917">
    <property type="entry name" value="Aminotrans_II_pyridoxalP_BS"/>
</dbReference>
<dbReference type="InterPro" id="IPR004839">
    <property type="entry name" value="Aminotransferase_I/II_large"/>
</dbReference>
<dbReference type="InterPro" id="IPR050087">
    <property type="entry name" value="AON_synthase_class-II"/>
</dbReference>
<dbReference type="InterPro" id="IPR004723">
    <property type="entry name" value="AONS_Archaea/Proteobacteria"/>
</dbReference>
<dbReference type="InterPro" id="IPR015424">
    <property type="entry name" value="PyrdxlP-dep_Trfase"/>
</dbReference>
<dbReference type="InterPro" id="IPR015421">
    <property type="entry name" value="PyrdxlP-dep_Trfase_major"/>
</dbReference>
<dbReference type="InterPro" id="IPR015422">
    <property type="entry name" value="PyrdxlP-dep_Trfase_small"/>
</dbReference>
<dbReference type="NCBIfam" id="TIGR00858">
    <property type="entry name" value="bioF"/>
    <property type="match status" value="1"/>
</dbReference>
<dbReference type="PANTHER" id="PTHR13693:SF100">
    <property type="entry name" value="8-AMINO-7-OXONONANOATE SYNTHASE"/>
    <property type="match status" value="1"/>
</dbReference>
<dbReference type="PANTHER" id="PTHR13693">
    <property type="entry name" value="CLASS II AMINOTRANSFERASE/8-AMINO-7-OXONONANOATE SYNTHASE"/>
    <property type="match status" value="1"/>
</dbReference>
<dbReference type="Pfam" id="PF00155">
    <property type="entry name" value="Aminotran_1_2"/>
    <property type="match status" value="1"/>
</dbReference>
<dbReference type="SUPFAM" id="SSF53383">
    <property type="entry name" value="PLP-dependent transferases"/>
    <property type="match status" value="1"/>
</dbReference>
<dbReference type="PROSITE" id="PS00599">
    <property type="entry name" value="AA_TRANSFER_CLASS_2"/>
    <property type="match status" value="1"/>
</dbReference>
<feature type="chain" id="PRO_0000380906" description="Putative 8-amino-7-oxononanoate synthase">
    <location>
        <begin position="1"/>
        <end position="395"/>
    </location>
</feature>
<feature type="binding site" evidence="1">
    <location>
        <position position="23"/>
    </location>
    <ligand>
        <name>substrate</name>
    </ligand>
</feature>
<feature type="binding site" evidence="1">
    <location>
        <begin position="110"/>
        <end position="111"/>
    </location>
    <ligand>
        <name>pyridoxal 5'-phosphate</name>
        <dbReference type="ChEBI" id="CHEBI:597326"/>
    </ligand>
</feature>
<feature type="binding site" evidence="1">
    <location>
        <position position="135"/>
    </location>
    <ligand>
        <name>substrate</name>
    </ligand>
</feature>
<feature type="binding site" evidence="1">
    <location>
        <position position="182"/>
    </location>
    <ligand>
        <name>pyridoxal 5'-phosphate</name>
        <dbReference type="ChEBI" id="CHEBI:597326"/>
    </ligand>
</feature>
<feature type="binding site" evidence="1">
    <location>
        <begin position="207"/>
        <end position="210"/>
    </location>
    <ligand>
        <name>pyridoxal 5'-phosphate</name>
        <dbReference type="ChEBI" id="CHEBI:597326"/>
    </ligand>
</feature>
<feature type="binding site" evidence="1">
    <location>
        <begin position="239"/>
        <end position="242"/>
    </location>
    <ligand>
        <name>pyridoxal 5'-phosphate</name>
        <dbReference type="ChEBI" id="CHEBI:597326"/>
    </ligand>
</feature>
<feature type="binding site" evidence="1">
    <location>
        <position position="356"/>
    </location>
    <ligand>
        <name>substrate</name>
    </ligand>
</feature>
<feature type="modified residue" description="N6-(pyridoxal phosphate)lysine" evidence="1">
    <location>
        <position position="242"/>
    </location>
</feature>
<proteinExistence type="inferred from homology"/>